<proteinExistence type="inferred from homology"/>
<feature type="chain" id="PRO_0000347598" description="Alanine--tRNA ligase">
    <location>
        <begin position="1"/>
        <end position="876"/>
    </location>
</feature>
<feature type="binding site" evidence="1">
    <location>
        <position position="564"/>
    </location>
    <ligand>
        <name>Zn(2+)</name>
        <dbReference type="ChEBI" id="CHEBI:29105"/>
    </ligand>
</feature>
<feature type="binding site" evidence="1">
    <location>
        <position position="568"/>
    </location>
    <ligand>
        <name>Zn(2+)</name>
        <dbReference type="ChEBI" id="CHEBI:29105"/>
    </ligand>
</feature>
<feature type="binding site" evidence="1">
    <location>
        <position position="666"/>
    </location>
    <ligand>
        <name>Zn(2+)</name>
        <dbReference type="ChEBI" id="CHEBI:29105"/>
    </ligand>
</feature>
<feature type="binding site" evidence="1">
    <location>
        <position position="670"/>
    </location>
    <ligand>
        <name>Zn(2+)</name>
        <dbReference type="ChEBI" id="CHEBI:29105"/>
    </ligand>
</feature>
<feature type="modified residue" description="N6-acetyllysine" evidence="1">
    <location>
        <position position="74"/>
    </location>
</feature>
<protein>
    <recommendedName>
        <fullName evidence="1">Alanine--tRNA ligase</fullName>
        <ecNumber evidence="1">6.1.1.7</ecNumber>
    </recommendedName>
    <alternativeName>
        <fullName evidence="1">Alanyl-tRNA synthetase</fullName>
        <shortName evidence="1">AlaRS</shortName>
    </alternativeName>
</protein>
<accession>B1LQ15</accession>
<keyword id="KW-0007">Acetylation</keyword>
<keyword id="KW-0030">Aminoacyl-tRNA synthetase</keyword>
<keyword id="KW-0067">ATP-binding</keyword>
<keyword id="KW-0963">Cytoplasm</keyword>
<keyword id="KW-0436">Ligase</keyword>
<keyword id="KW-0479">Metal-binding</keyword>
<keyword id="KW-0547">Nucleotide-binding</keyword>
<keyword id="KW-0648">Protein biosynthesis</keyword>
<keyword id="KW-0694">RNA-binding</keyword>
<keyword id="KW-0820">tRNA-binding</keyword>
<keyword id="KW-0862">Zinc</keyword>
<gene>
    <name evidence="1" type="primary">alaS</name>
    <name type="ordered locus">EcSMS35_2820</name>
</gene>
<organism>
    <name type="scientific">Escherichia coli (strain SMS-3-5 / SECEC)</name>
    <dbReference type="NCBI Taxonomy" id="439855"/>
    <lineage>
        <taxon>Bacteria</taxon>
        <taxon>Pseudomonadati</taxon>
        <taxon>Pseudomonadota</taxon>
        <taxon>Gammaproteobacteria</taxon>
        <taxon>Enterobacterales</taxon>
        <taxon>Enterobacteriaceae</taxon>
        <taxon>Escherichia</taxon>
    </lineage>
</organism>
<comment type="function">
    <text evidence="1">Catalyzes the attachment of alanine to tRNA(Ala) in a two-step reaction: alanine is first activated by ATP to form Ala-AMP and then transferred to the acceptor end of tRNA(Ala). Also edits incorrectly charged Ser-tRNA(Ala) and Gly-tRNA(Ala) via its editing domain.</text>
</comment>
<comment type="catalytic activity">
    <reaction evidence="1">
        <text>tRNA(Ala) + L-alanine + ATP = L-alanyl-tRNA(Ala) + AMP + diphosphate</text>
        <dbReference type="Rhea" id="RHEA:12540"/>
        <dbReference type="Rhea" id="RHEA-COMP:9657"/>
        <dbReference type="Rhea" id="RHEA-COMP:9923"/>
        <dbReference type="ChEBI" id="CHEBI:30616"/>
        <dbReference type="ChEBI" id="CHEBI:33019"/>
        <dbReference type="ChEBI" id="CHEBI:57972"/>
        <dbReference type="ChEBI" id="CHEBI:78442"/>
        <dbReference type="ChEBI" id="CHEBI:78497"/>
        <dbReference type="ChEBI" id="CHEBI:456215"/>
        <dbReference type="EC" id="6.1.1.7"/>
    </reaction>
</comment>
<comment type="cofactor">
    <cofactor evidence="1">
        <name>Zn(2+)</name>
        <dbReference type="ChEBI" id="CHEBI:29105"/>
    </cofactor>
    <text evidence="1">Binds 1 zinc ion per subunit.</text>
</comment>
<comment type="subunit">
    <text evidence="1">Homotetramer.</text>
</comment>
<comment type="subcellular location">
    <subcellularLocation>
        <location evidence="1">Cytoplasm</location>
    </subcellularLocation>
</comment>
<comment type="domain">
    <text evidence="1">Consists of three domains; the N-terminal catalytic domain, the editing domain and the C-terminal C-Ala domain. The editing domain removes incorrectly charged amino acids, while the C-Ala domain, along with tRNA(Ala), serves as a bridge to cooperatively bring together the editing and aminoacylation centers thus stimulating deacylation of misacylated tRNAs.</text>
</comment>
<comment type="similarity">
    <text evidence="1">Belongs to the class-II aminoacyl-tRNA synthetase family.</text>
</comment>
<sequence>MSKSTAEIRQAFLDFFHSKGHQVVASSSLVPHNDPTLLFTNAGMNQFKDVFLGLDKRNYSRATTSQRCVRAGGKHNDLENVGYTARHHTFFEMLGNFSFGDYFKHDAIQFAWELLTSEKWFALPKERLWVTVYESDDEAYEIWEKEVGIPRERIIRIGDNKGAPYASDNFWQMGDTGPCGPCTEIFYDHGDHIWGGPPGSPEEDGDRYIEIWNIVFMQFNRQADGTMEPLPKPSVDTGMGLERIAAVLQHVNSNYDIDLFRTLIQAVAKVTGATDLSNKSLRVIADHIRSCAFLIADGVMPSNENRGYVLRRIIRRAVRHGNMLGAKETFFYKLVGPLIDVMGSAGEDLKRQQAQVEQVLKTEEEQFARTLERGLALLDEELAKLSGDTLDGETAFRLYDTYGFPVDLTADVCRERNIKVDEAGFEAAMEEQRRRAREASGFGADYNAMIRVDSASEFKGYDHLELNGKVTALFVDGKAVDAINAGQEAVVVLDQTPFYAESGGQVGDKGELKGANFSFAVEDTQKYGQAIGHIGKLATGSLKVGDAVQADVDEARRARIRLNHSATHLMHAALRQVLGTHVSQKGSLVNDKVLRFDFSHNEAMKPEEIRAVEDLVNAQIRRNLPIETNIMDLEAAKAKGAMALFGEKYDERVRVLSMGDFSTELCGGTHASRTGDIGLFRIISESGTAAGVRRIEAVTGEGAIATVHADSDRLSEVAHLLKGDSNNLADKVRSVLERTRQLEKELQQLKEQAAAQESANLSSKAIDVNGVKLLVSELSGVEPKMLRTMVDDLKNQLGSTIIVLATVAEGKVSLIAGVSKDVTDRVKAGELIGMVAQQVGGKGGGRPDMAQAGGTDAAALPAALASVKGWVSAKLQ</sequence>
<dbReference type="EC" id="6.1.1.7" evidence="1"/>
<dbReference type="EMBL" id="CP000970">
    <property type="protein sequence ID" value="ACB18499.1"/>
    <property type="molecule type" value="Genomic_DNA"/>
</dbReference>
<dbReference type="RefSeq" id="WP_000047191.1">
    <property type="nucleotide sequence ID" value="NC_010498.1"/>
</dbReference>
<dbReference type="SMR" id="B1LQ15"/>
<dbReference type="KEGG" id="ecm:EcSMS35_2820"/>
<dbReference type="HOGENOM" id="CLU_004485_1_1_6"/>
<dbReference type="Proteomes" id="UP000007011">
    <property type="component" value="Chromosome"/>
</dbReference>
<dbReference type="GO" id="GO:0005829">
    <property type="term" value="C:cytosol"/>
    <property type="evidence" value="ECO:0007669"/>
    <property type="project" value="TreeGrafter"/>
</dbReference>
<dbReference type="GO" id="GO:0004813">
    <property type="term" value="F:alanine-tRNA ligase activity"/>
    <property type="evidence" value="ECO:0007669"/>
    <property type="project" value="UniProtKB-UniRule"/>
</dbReference>
<dbReference type="GO" id="GO:0002161">
    <property type="term" value="F:aminoacyl-tRNA deacylase activity"/>
    <property type="evidence" value="ECO:0007669"/>
    <property type="project" value="TreeGrafter"/>
</dbReference>
<dbReference type="GO" id="GO:0005524">
    <property type="term" value="F:ATP binding"/>
    <property type="evidence" value="ECO:0007669"/>
    <property type="project" value="UniProtKB-UniRule"/>
</dbReference>
<dbReference type="GO" id="GO:0000049">
    <property type="term" value="F:tRNA binding"/>
    <property type="evidence" value="ECO:0007669"/>
    <property type="project" value="UniProtKB-KW"/>
</dbReference>
<dbReference type="GO" id="GO:0008270">
    <property type="term" value="F:zinc ion binding"/>
    <property type="evidence" value="ECO:0007669"/>
    <property type="project" value="UniProtKB-UniRule"/>
</dbReference>
<dbReference type="GO" id="GO:0006419">
    <property type="term" value="P:alanyl-tRNA aminoacylation"/>
    <property type="evidence" value="ECO:0007669"/>
    <property type="project" value="UniProtKB-UniRule"/>
</dbReference>
<dbReference type="GO" id="GO:0045892">
    <property type="term" value="P:negative regulation of DNA-templated transcription"/>
    <property type="evidence" value="ECO:0007669"/>
    <property type="project" value="TreeGrafter"/>
</dbReference>
<dbReference type="CDD" id="cd00673">
    <property type="entry name" value="AlaRS_core"/>
    <property type="match status" value="1"/>
</dbReference>
<dbReference type="FunFam" id="2.40.30.130:FF:000001">
    <property type="entry name" value="Alanine--tRNA ligase"/>
    <property type="match status" value="1"/>
</dbReference>
<dbReference type="FunFam" id="3.10.310.40:FF:000001">
    <property type="entry name" value="Alanine--tRNA ligase"/>
    <property type="match status" value="1"/>
</dbReference>
<dbReference type="FunFam" id="3.30.54.20:FF:000001">
    <property type="entry name" value="Alanine--tRNA ligase"/>
    <property type="match status" value="1"/>
</dbReference>
<dbReference type="FunFam" id="3.30.930.10:FF:000004">
    <property type="entry name" value="Alanine--tRNA ligase"/>
    <property type="match status" value="1"/>
</dbReference>
<dbReference type="FunFam" id="3.30.980.10:FF:000004">
    <property type="entry name" value="Alanine--tRNA ligase, cytoplasmic"/>
    <property type="match status" value="1"/>
</dbReference>
<dbReference type="Gene3D" id="2.40.30.130">
    <property type="match status" value="1"/>
</dbReference>
<dbReference type="Gene3D" id="3.10.310.40">
    <property type="match status" value="1"/>
</dbReference>
<dbReference type="Gene3D" id="3.30.54.20">
    <property type="match status" value="1"/>
</dbReference>
<dbReference type="Gene3D" id="6.10.250.550">
    <property type="match status" value="1"/>
</dbReference>
<dbReference type="Gene3D" id="3.30.930.10">
    <property type="entry name" value="Bira Bifunctional Protein, Domain 2"/>
    <property type="match status" value="1"/>
</dbReference>
<dbReference type="Gene3D" id="3.30.980.10">
    <property type="entry name" value="Threonyl-trna Synthetase, Chain A, domain 2"/>
    <property type="match status" value="1"/>
</dbReference>
<dbReference type="HAMAP" id="MF_00036_B">
    <property type="entry name" value="Ala_tRNA_synth_B"/>
    <property type="match status" value="1"/>
</dbReference>
<dbReference type="InterPro" id="IPR045864">
    <property type="entry name" value="aa-tRNA-synth_II/BPL/LPL"/>
</dbReference>
<dbReference type="InterPro" id="IPR002318">
    <property type="entry name" value="Ala-tRNA-lgiase_IIc"/>
</dbReference>
<dbReference type="InterPro" id="IPR018162">
    <property type="entry name" value="Ala-tRNA-ligase_IIc_anticod-bd"/>
</dbReference>
<dbReference type="InterPro" id="IPR018165">
    <property type="entry name" value="Ala-tRNA-synth_IIc_core"/>
</dbReference>
<dbReference type="InterPro" id="IPR018164">
    <property type="entry name" value="Ala-tRNA-synth_IIc_N"/>
</dbReference>
<dbReference type="InterPro" id="IPR050058">
    <property type="entry name" value="Ala-tRNA_ligase"/>
</dbReference>
<dbReference type="InterPro" id="IPR023033">
    <property type="entry name" value="Ala_tRNA_ligase_euk/bac"/>
</dbReference>
<dbReference type="InterPro" id="IPR003156">
    <property type="entry name" value="DHHA1_dom"/>
</dbReference>
<dbReference type="InterPro" id="IPR018163">
    <property type="entry name" value="Thr/Ala-tRNA-synth_IIc_edit"/>
</dbReference>
<dbReference type="InterPro" id="IPR009000">
    <property type="entry name" value="Transl_B-barrel_sf"/>
</dbReference>
<dbReference type="InterPro" id="IPR012947">
    <property type="entry name" value="tRNA_SAD"/>
</dbReference>
<dbReference type="NCBIfam" id="TIGR00344">
    <property type="entry name" value="alaS"/>
    <property type="match status" value="1"/>
</dbReference>
<dbReference type="PANTHER" id="PTHR11777:SF9">
    <property type="entry name" value="ALANINE--TRNA LIGASE, CYTOPLASMIC"/>
    <property type="match status" value="1"/>
</dbReference>
<dbReference type="PANTHER" id="PTHR11777">
    <property type="entry name" value="ALANYL-TRNA SYNTHETASE"/>
    <property type="match status" value="1"/>
</dbReference>
<dbReference type="Pfam" id="PF02272">
    <property type="entry name" value="DHHA1"/>
    <property type="match status" value="1"/>
</dbReference>
<dbReference type="Pfam" id="PF01411">
    <property type="entry name" value="tRNA-synt_2c"/>
    <property type="match status" value="1"/>
</dbReference>
<dbReference type="Pfam" id="PF07973">
    <property type="entry name" value="tRNA_SAD"/>
    <property type="match status" value="1"/>
</dbReference>
<dbReference type="PRINTS" id="PR00980">
    <property type="entry name" value="TRNASYNTHALA"/>
</dbReference>
<dbReference type="SMART" id="SM00863">
    <property type="entry name" value="tRNA_SAD"/>
    <property type="match status" value="1"/>
</dbReference>
<dbReference type="SUPFAM" id="SSF55681">
    <property type="entry name" value="Class II aaRS and biotin synthetases"/>
    <property type="match status" value="1"/>
</dbReference>
<dbReference type="SUPFAM" id="SSF101353">
    <property type="entry name" value="Putative anticodon-binding domain of alanyl-tRNA synthetase (AlaRS)"/>
    <property type="match status" value="1"/>
</dbReference>
<dbReference type="SUPFAM" id="SSF55186">
    <property type="entry name" value="ThrRS/AlaRS common domain"/>
    <property type="match status" value="1"/>
</dbReference>
<dbReference type="SUPFAM" id="SSF50447">
    <property type="entry name" value="Translation proteins"/>
    <property type="match status" value="1"/>
</dbReference>
<dbReference type="PROSITE" id="PS50860">
    <property type="entry name" value="AA_TRNA_LIGASE_II_ALA"/>
    <property type="match status" value="1"/>
</dbReference>
<reference key="1">
    <citation type="journal article" date="2008" name="J. Bacteriol.">
        <title>Insights into the environmental resistance gene pool from the genome sequence of the multidrug-resistant environmental isolate Escherichia coli SMS-3-5.</title>
        <authorList>
            <person name="Fricke W.F."/>
            <person name="Wright M.S."/>
            <person name="Lindell A.H."/>
            <person name="Harkins D.M."/>
            <person name="Baker-Austin C."/>
            <person name="Ravel J."/>
            <person name="Stepanauskas R."/>
        </authorList>
    </citation>
    <scope>NUCLEOTIDE SEQUENCE [LARGE SCALE GENOMIC DNA]</scope>
    <source>
        <strain>SMS-3-5 / SECEC</strain>
    </source>
</reference>
<evidence type="ECO:0000255" key="1">
    <source>
        <dbReference type="HAMAP-Rule" id="MF_00036"/>
    </source>
</evidence>
<name>SYA_ECOSM</name>